<dbReference type="EC" id="1.14.11.65" evidence="6 7"/>
<dbReference type="EMBL" id="AK131497">
    <property type="protein sequence ID" value="BAD18641.1"/>
    <property type="status" value="ALT_FRAME"/>
    <property type="molecule type" value="mRNA"/>
</dbReference>
<dbReference type="EMBL" id="AC004849">
    <property type="status" value="NOT_ANNOTATED_CDS"/>
    <property type="molecule type" value="Genomic_DNA"/>
</dbReference>
<dbReference type="EMBL" id="CH236950">
    <property type="protein sequence ID" value="EAL24032.1"/>
    <property type="status" value="ALT_SEQ"/>
    <property type="molecule type" value="Genomic_DNA"/>
</dbReference>
<dbReference type="EMBL" id="AB051505">
    <property type="protein sequence ID" value="BAB21809.1"/>
    <property type="molecule type" value="mRNA"/>
</dbReference>
<dbReference type="EMBL" id="BX641017">
    <property type="protein sequence ID" value="CAE46011.1"/>
    <property type="molecule type" value="mRNA"/>
</dbReference>
<dbReference type="CCDS" id="CCDS43658.1">
    <molecule id="Q6ZMT4-1"/>
</dbReference>
<dbReference type="RefSeq" id="NP_085150.1">
    <molecule id="Q6ZMT4-1"/>
    <property type="nucleotide sequence ID" value="NM_030647.2"/>
</dbReference>
<dbReference type="PDB" id="3KV5">
    <property type="method" value="X-ray"/>
    <property type="resolution" value="2.39 A"/>
    <property type="chains" value="A/D=1-488"/>
</dbReference>
<dbReference type="PDB" id="3KV6">
    <property type="method" value="X-ray"/>
    <property type="resolution" value="2.89 A"/>
    <property type="chains" value="A/D=1-488"/>
</dbReference>
<dbReference type="PDB" id="3KV9">
    <property type="method" value="X-ray"/>
    <property type="resolution" value="2.29 A"/>
    <property type="chains" value="A=92-488"/>
</dbReference>
<dbReference type="PDB" id="3KVA">
    <property type="method" value="X-ray"/>
    <property type="resolution" value="2.79 A"/>
    <property type="chains" value="A=92-488"/>
</dbReference>
<dbReference type="PDB" id="3KVB">
    <property type="method" value="X-ray"/>
    <property type="resolution" value="2.69 A"/>
    <property type="chains" value="A=92-488"/>
</dbReference>
<dbReference type="PDB" id="3U78">
    <property type="method" value="X-ray"/>
    <property type="resolution" value="2.69 A"/>
    <property type="chains" value="A=92-488"/>
</dbReference>
<dbReference type="PDBsum" id="3KV5"/>
<dbReference type="PDBsum" id="3KV6"/>
<dbReference type="PDBsum" id="3KV9"/>
<dbReference type="PDBsum" id="3KVA"/>
<dbReference type="PDBsum" id="3KVB"/>
<dbReference type="PDBsum" id="3U78"/>
<dbReference type="SMR" id="Q6ZMT4"/>
<dbReference type="BioGRID" id="123331">
    <property type="interactions" value="4"/>
</dbReference>
<dbReference type="FunCoup" id="Q6ZMT4">
    <property type="interactions" value="2289"/>
</dbReference>
<dbReference type="IntAct" id="Q6ZMT4">
    <property type="interactions" value="3"/>
</dbReference>
<dbReference type="MINT" id="Q6ZMT4"/>
<dbReference type="STRING" id="9606.ENSP00000380692"/>
<dbReference type="BindingDB" id="Q6ZMT4"/>
<dbReference type="ChEMBL" id="CHEMBL2163177"/>
<dbReference type="DrugCentral" id="Q6ZMT4"/>
<dbReference type="GuidetoPHARMACOLOGY" id="2686"/>
<dbReference type="iPTMnet" id="Q6ZMT4"/>
<dbReference type="PhosphoSitePlus" id="Q6ZMT4"/>
<dbReference type="BioMuta" id="KDM7A"/>
<dbReference type="DMDM" id="90111764"/>
<dbReference type="jPOST" id="Q6ZMT4"/>
<dbReference type="MassIVE" id="Q6ZMT4"/>
<dbReference type="PaxDb" id="9606-ENSP00000380692"/>
<dbReference type="PeptideAtlas" id="Q6ZMT4"/>
<dbReference type="ProteomicsDB" id="67913">
    <molecule id="Q6ZMT4-1"/>
</dbReference>
<dbReference type="ProteomicsDB" id="67914">
    <molecule id="Q6ZMT4-2"/>
</dbReference>
<dbReference type="Antibodypedia" id="2004">
    <property type="antibodies" value="107 antibodies from 19 providers"/>
</dbReference>
<dbReference type="DNASU" id="80853"/>
<dbReference type="Ensembl" id="ENST00000397560.7">
    <molecule id="Q6ZMT4-1"/>
    <property type="protein sequence ID" value="ENSP00000380692.2"/>
    <property type="gene ID" value="ENSG00000006459.11"/>
</dbReference>
<dbReference type="GeneID" id="80853"/>
<dbReference type="KEGG" id="hsa:80853"/>
<dbReference type="MANE-Select" id="ENST00000397560.7">
    <property type="protein sequence ID" value="ENSP00000380692.2"/>
    <property type="RefSeq nucleotide sequence ID" value="NM_030647.2"/>
    <property type="RefSeq protein sequence ID" value="NP_085150.1"/>
</dbReference>
<dbReference type="UCSC" id="uc003vvm.4">
    <molecule id="Q6ZMT4-1"/>
    <property type="organism name" value="human"/>
</dbReference>
<dbReference type="AGR" id="HGNC:22224"/>
<dbReference type="CTD" id="80853"/>
<dbReference type="DisGeNET" id="80853"/>
<dbReference type="GeneCards" id="KDM7A"/>
<dbReference type="HGNC" id="HGNC:22224">
    <property type="gene designation" value="KDM7A"/>
</dbReference>
<dbReference type="HPA" id="ENSG00000006459">
    <property type="expression patterns" value="Low tissue specificity"/>
</dbReference>
<dbReference type="MIM" id="619640">
    <property type="type" value="gene"/>
</dbReference>
<dbReference type="neXtProt" id="NX_Q6ZMT4"/>
<dbReference type="OpenTargets" id="ENSG00000006459"/>
<dbReference type="PharmGKB" id="PA162392512"/>
<dbReference type="VEuPathDB" id="HostDB:ENSG00000006459"/>
<dbReference type="eggNOG" id="KOG1632">
    <property type="taxonomic scope" value="Eukaryota"/>
</dbReference>
<dbReference type="eggNOG" id="KOG1633">
    <property type="taxonomic scope" value="Eukaryota"/>
</dbReference>
<dbReference type="GeneTree" id="ENSGT00940000158039"/>
<dbReference type="HOGENOM" id="CLU_003540_2_1_1"/>
<dbReference type="InParanoid" id="Q6ZMT4"/>
<dbReference type="OMA" id="PWEEDIT"/>
<dbReference type="OrthoDB" id="5876800at2759"/>
<dbReference type="PAN-GO" id="Q6ZMT4">
    <property type="GO annotations" value="4 GO annotations based on evolutionary models"/>
</dbReference>
<dbReference type="PhylomeDB" id="Q6ZMT4"/>
<dbReference type="TreeFam" id="TF106480"/>
<dbReference type="BioCyc" id="MetaCyc:ENSG00000006459-MONOMER"/>
<dbReference type="BRENDA" id="1.14.11.65">
    <property type="organism ID" value="2681"/>
</dbReference>
<dbReference type="PathwayCommons" id="Q6ZMT4"/>
<dbReference type="Reactome" id="R-HSA-3214842">
    <property type="pathway name" value="HDMs demethylate histones"/>
</dbReference>
<dbReference type="Reactome" id="R-HSA-6802952">
    <property type="pathway name" value="Signaling by BRAF and RAF1 fusions"/>
</dbReference>
<dbReference type="SABIO-RK" id="Q6ZMT4"/>
<dbReference type="SignaLink" id="Q6ZMT4"/>
<dbReference type="SIGNOR" id="Q6ZMT4"/>
<dbReference type="BioGRID-ORCS" id="80853">
    <property type="hits" value="12 hits in 1171 CRISPR screens"/>
</dbReference>
<dbReference type="CD-CODE" id="91857CE7">
    <property type="entry name" value="Nucleolus"/>
</dbReference>
<dbReference type="ChiTaRS" id="KDM7A">
    <property type="organism name" value="human"/>
</dbReference>
<dbReference type="EvolutionaryTrace" id="Q6ZMT4"/>
<dbReference type="GenomeRNAi" id="80853"/>
<dbReference type="Pharos" id="Q6ZMT4">
    <property type="development level" value="Tchem"/>
</dbReference>
<dbReference type="PRO" id="PR:Q6ZMT4"/>
<dbReference type="Proteomes" id="UP000005640">
    <property type="component" value="Chromosome 7"/>
</dbReference>
<dbReference type="RNAct" id="Q6ZMT4">
    <property type="molecule type" value="protein"/>
</dbReference>
<dbReference type="Bgee" id="ENSG00000006459">
    <property type="expression patterns" value="Expressed in cartilage tissue and 209 other cell types or tissues"/>
</dbReference>
<dbReference type="ExpressionAtlas" id="Q6ZMT4">
    <property type="expression patterns" value="baseline and differential"/>
</dbReference>
<dbReference type="GO" id="GO:0005730">
    <property type="term" value="C:nucleolus"/>
    <property type="evidence" value="ECO:0000314"/>
    <property type="project" value="HPA"/>
</dbReference>
<dbReference type="GO" id="GO:0005654">
    <property type="term" value="C:nucleoplasm"/>
    <property type="evidence" value="ECO:0000314"/>
    <property type="project" value="HPA"/>
</dbReference>
<dbReference type="GO" id="GO:0005634">
    <property type="term" value="C:nucleus"/>
    <property type="evidence" value="ECO:0000305"/>
    <property type="project" value="UniProtKB"/>
</dbReference>
<dbReference type="GO" id="GO:0016706">
    <property type="term" value="F:2-oxoglutarate-dependent dioxygenase activity"/>
    <property type="evidence" value="ECO:0000314"/>
    <property type="project" value="UniProtKB"/>
</dbReference>
<dbReference type="GO" id="GO:0032452">
    <property type="term" value="F:histone demethylase activity"/>
    <property type="evidence" value="ECO:0000318"/>
    <property type="project" value="GO_Central"/>
</dbReference>
<dbReference type="GO" id="GO:0071558">
    <property type="term" value="F:histone H3K27me2/H3K27me3 demethylase activity"/>
    <property type="evidence" value="ECO:0000314"/>
    <property type="project" value="UniProtKB"/>
</dbReference>
<dbReference type="GO" id="GO:0051864">
    <property type="term" value="F:histone H3K36 demethylase activity"/>
    <property type="evidence" value="ECO:0000314"/>
    <property type="project" value="UniProtKB"/>
</dbReference>
<dbReference type="GO" id="GO:0032454">
    <property type="term" value="F:histone H3K9 demethylase activity"/>
    <property type="evidence" value="ECO:0000314"/>
    <property type="project" value="UniProtKB"/>
</dbReference>
<dbReference type="GO" id="GO:0140683">
    <property type="term" value="F:histone H3K9me/H3K9me2 demethylase activity"/>
    <property type="evidence" value="ECO:0000314"/>
    <property type="project" value="UniProtKB"/>
</dbReference>
<dbReference type="GO" id="GO:0035575">
    <property type="term" value="F:histone H4K20 demethylase activity"/>
    <property type="evidence" value="ECO:0000314"/>
    <property type="project" value="UniProtKB"/>
</dbReference>
<dbReference type="GO" id="GO:0005506">
    <property type="term" value="F:iron ion binding"/>
    <property type="evidence" value="ECO:0000314"/>
    <property type="project" value="UniProtKB"/>
</dbReference>
<dbReference type="GO" id="GO:0003712">
    <property type="term" value="F:transcription coregulator activity"/>
    <property type="evidence" value="ECO:0000318"/>
    <property type="project" value="GO_Central"/>
</dbReference>
<dbReference type="GO" id="GO:0008270">
    <property type="term" value="F:zinc ion binding"/>
    <property type="evidence" value="ECO:0000314"/>
    <property type="project" value="UniProtKB"/>
</dbReference>
<dbReference type="GO" id="GO:0006338">
    <property type="term" value="P:chromatin remodeling"/>
    <property type="evidence" value="ECO:0000318"/>
    <property type="project" value="GO_Central"/>
</dbReference>
<dbReference type="GO" id="GO:0030901">
    <property type="term" value="P:midbrain development"/>
    <property type="evidence" value="ECO:0000250"/>
    <property type="project" value="UniProtKB"/>
</dbReference>
<dbReference type="GO" id="GO:0045893">
    <property type="term" value="P:positive regulation of DNA-templated transcription"/>
    <property type="evidence" value="ECO:0007669"/>
    <property type="project" value="Ensembl"/>
</dbReference>
<dbReference type="GO" id="GO:0006357">
    <property type="term" value="P:regulation of transcription by RNA polymerase II"/>
    <property type="evidence" value="ECO:0000318"/>
    <property type="project" value="GO_Central"/>
</dbReference>
<dbReference type="CDD" id="cd15640">
    <property type="entry name" value="PHD_KDM7"/>
    <property type="match status" value="1"/>
</dbReference>
<dbReference type="FunFam" id="1.20.58.1360:FF:000003">
    <property type="entry name" value="Lysine-specific demethylase 7A"/>
    <property type="match status" value="1"/>
</dbReference>
<dbReference type="FunFam" id="2.60.120.650:FF:000021">
    <property type="entry name" value="Lysine-specific demethylase 7A"/>
    <property type="match status" value="1"/>
</dbReference>
<dbReference type="FunFam" id="3.30.40.10:FF:000193">
    <property type="entry name" value="lysine-specific demethylase PHF2 isoform X1"/>
    <property type="match status" value="1"/>
</dbReference>
<dbReference type="Gene3D" id="1.20.58.1360">
    <property type="match status" value="1"/>
</dbReference>
<dbReference type="Gene3D" id="2.60.120.650">
    <property type="entry name" value="Cupin"/>
    <property type="match status" value="1"/>
</dbReference>
<dbReference type="Gene3D" id="3.30.40.10">
    <property type="entry name" value="Zinc/RING finger domain, C3HC4 (zinc finger)"/>
    <property type="match status" value="1"/>
</dbReference>
<dbReference type="InterPro" id="IPR041070">
    <property type="entry name" value="JHD"/>
</dbReference>
<dbReference type="InterPro" id="IPR050690">
    <property type="entry name" value="JHDM1_Histone_Demethylase"/>
</dbReference>
<dbReference type="InterPro" id="IPR003347">
    <property type="entry name" value="JmjC_dom"/>
</dbReference>
<dbReference type="InterPro" id="IPR019786">
    <property type="entry name" value="Zinc_finger_PHD-type_CS"/>
</dbReference>
<dbReference type="InterPro" id="IPR011011">
    <property type="entry name" value="Znf_FYVE_PHD"/>
</dbReference>
<dbReference type="InterPro" id="IPR001965">
    <property type="entry name" value="Znf_PHD"/>
</dbReference>
<dbReference type="InterPro" id="IPR019787">
    <property type="entry name" value="Znf_PHD-finger"/>
</dbReference>
<dbReference type="InterPro" id="IPR013083">
    <property type="entry name" value="Znf_RING/FYVE/PHD"/>
</dbReference>
<dbReference type="PANTHER" id="PTHR23123">
    <property type="entry name" value="PHD/F-BOX CONTAINING PROTEIN"/>
    <property type="match status" value="1"/>
</dbReference>
<dbReference type="Pfam" id="PF17811">
    <property type="entry name" value="JHD"/>
    <property type="match status" value="1"/>
</dbReference>
<dbReference type="Pfam" id="PF02373">
    <property type="entry name" value="JmjC"/>
    <property type="match status" value="1"/>
</dbReference>
<dbReference type="Pfam" id="PF00628">
    <property type="entry name" value="PHD"/>
    <property type="match status" value="1"/>
</dbReference>
<dbReference type="SMART" id="SM00558">
    <property type="entry name" value="JmjC"/>
    <property type="match status" value="1"/>
</dbReference>
<dbReference type="SMART" id="SM00249">
    <property type="entry name" value="PHD"/>
    <property type="match status" value="1"/>
</dbReference>
<dbReference type="SUPFAM" id="SSF51197">
    <property type="entry name" value="Clavaminate synthase-like"/>
    <property type="match status" value="1"/>
</dbReference>
<dbReference type="SUPFAM" id="SSF57903">
    <property type="entry name" value="FYVE/PHD zinc finger"/>
    <property type="match status" value="1"/>
</dbReference>
<dbReference type="PROSITE" id="PS51184">
    <property type="entry name" value="JMJC"/>
    <property type="match status" value="1"/>
</dbReference>
<dbReference type="PROSITE" id="PS01359">
    <property type="entry name" value="ZF_PHD_1"/>
    <property type="match status" value="1"/>
</dbReference>
<dbReference type="PROSITE" id="PS50016">
    <property type="entry name" value="ZF_PHD_2"/>
    <property type="match status" value="1"/>
</dbReference>
<feature type="chain" id="PRO_0000226771" description="Lysine-specific demethylase 7A">
    <location>
        <begin position="1"/>
        <end position="941"/>
    </location>
</feature>
<feature type="domain" description="JmjC" evidence="3">
    <location>
        <begin position="230"/>
        <end position="386"/>
    </location>
</feature>
<feature type="zinc finger region" description="PHD-type" evidence="2">
    <location>
        <begin position="37"/>
        <end position="88"/>
    </location>
</feature>
<feature type="region of interest" description="Linker">
    <location>
        <begin position="97"/>
        <end position="114"/>
    </location>
</feature>
<feature type="region of interest" description="Disordered" evidence="4">
    <location>
        <begin position="597"/>
        <end position="633"/>
    </location>
</feature>
<feature type="region of interest" description="Disordered" evidence="4">
    <location>
        <begin position="677"/>
        <end position="700"/>
    </location>
</feature>
<feature type="region of interest" description="Disordered" evidence="4">
    <location>
        <begin position="819"/>
        <end position="921"/>
    </location>
</feature>
<feature type="compositionally biased region" description="Basic and acidic residues" evidence="4">
    <location>
        <begin position="618"/>
        <end position="633"/>
    </location>
</feature>
<feature type="compositionally biased region" description="Basic and acidic residues" evidence="4">
    <location>
        <begin position="685"/>
        <end position="700"/>
    </location>
</feature>
<feature type="compositionally biased region" description="Polar residues" evidence="4">
    <location>
        <begin position="834"/>
        <end position="876"/>
    </location>
</feature>
<feature type="binding site" evidence="1">
    <location>
        <position position="279"/>
    </location>
    <ligand>
        <name>substrate</name>
    </ligand>
</feature>
<feature type="binding site" evidence="3 6">
    <location>
        <position position="282"/>
    </location>
    <ligand>
        <name>Fe cation</name>
        <dbReference type="ChEBI" id="CHEBI:24875"/>
        <note>catalytic</note>
    </ligand>
</feature>
<feature type="binding site" evidence="3 6">
    <location>
        <position position="284"/>
    </location>
    <ligand>
        <name>Fe cation</name>
        <dbReference type="ChEBI" id="CHEBI:24875"/>
        <note>catalytic</note>
    </ligand>
</feature>
<feature type="binding site" evidence="1">
    <location>
        <position position="299"/>
    </location>
    <ligand>
        <name>substrate</name>
    </ligand>
</feature>
<feature type="binding site" evidence="3 6">
    <location>
        <position position="354"/>
    </location>
    <ligand>
        <name>Fe cation</name>
        <dbReference type="ChEBI" id="CHEBI:24875"/>
        <note>catalytic</note>
    </ligand>
</feature>
<feature type="modified residue" description="Phosphoserine" evidence="12">
    <location>
        <position position="604"/>
    </location>
</feature>
<feature type="splice variant" id="VSP_017458" description="In isoform 2." evidence="8">
    <original>GYHVKTEDPDLRTSSWIK</original>
    <variation>ETRSHLCCPDWSPTPELK</variation>
    <location>
        <begin position="792"/>
        <end position="809"/>
    </location>
</feature>
<feature type="splice variant" id="VSP_017459" description="In isoform 2." evidence="8">
    <location>
        <begin position="810"/>
        <end position="941"/>
    </location>
</feature>
<feature type="sequence variant" id="VAR_049653" description="In dbSNP:rs6950119." evidence="5">
    <original>R</original>
    <variation>S</variation>
    <location>
        <position position="644"/>
    </location>
</feature>
<feature type="sequence conflict" description="In Ref. 5; CAE46011." evidence="9" ref="5">
    <original>T</original>
    <variation>I</variation>
    <location>
        <position position="677"/>
    </location>
</feature>
<feature type="turn" evidence="13">
    <location>
        <begin position="40"/>
        <end position="43"/>
    </location>
</feature>
<feature type="strand" evidence="13">
    <location>
        <begin position="52"/>
        <end position="55"/>
    </location>
</feature>
<feature type="turn" evidence="13">
    <location>
        <begin position="56"/>
        <end position="58"/>
    </location>
</feature>
<feature type="strand" evidence="13">
    <location>
        <begin position="61"/>
        <end position="63"/>
    </location>
</feature>
<feature type="helix" evidence="13">
    <location>
        <begin position="64"/>
        <end position="67"/>
    </location>
</feature>
<feature type="helix" evidence="13">
    <location>
        <begin position="71"/>
        <end position="76"/>
    </location>
</feature>
<feature type="strand" evidence="13">
    <location>
        <begin position="77"/>
        <end position="80"/>
    </location>
</feature>
<feature type="helix" evidence="13">
    <location>
        <begin position="83"/>
        <end position="89"/>
    </location>
</feature>
<feature type="strand" evidence="13">
    <location>
        <begin position="100"/>
        <end position="104"/>
    </location>
</feature>
<feature type="helix" evidence="14">
    <location>
        <begin position="120"/>
        <end position="128"/>
    </location>
</feature>
<feature type="helix" evidence="14">
    <location>
        <begin position="134"/>
        <end position="136"/>
    </location>
</feature>
<feature type="turn" evidence="14">
    <location>
        <begin position="143"/>
        <end position="145"/>
    </location>
</feature>
<feature type="helix" evidence="14">
    <location>
        <begin position="148"/>
        <end position="154"/>
    </location>
</feature>
<feature type="strand" evidence="14">
    <location>
        <begin position="160"/>
        <end position="164"/>
    </location>
</feature>
<feature type="turn" evidence="13">
    <location>
        <begin position="166"/>
        <end position="168"/>
    </location>
</feature>
<feature type="helix" evidence="14">
    <location>
        <begin position="179"/>
        <end position="186"/>
    </location>
</feature>
<feature type="turn" evidence="14">
    <location>
        <begin position="187"/>
        <end position="189"/>
    </location>
</feature>
<feature type="strand" evidence="14">
    <location>
        <begin position="190"/>
        <end position="196"/>
    </location>
</feature>
<feature type="turn" evidence="14">
    <location>
        <begin position="197"/>
        <end position="200"/>
    </location>
</feature>
<feature type="strand" evidence="14">
    <location>
        <begin position="201"/>
        <end position="206"/>
    </location>
</feature>
<feature type="helix" evidence="14">
    <location>
        <begin position="207"/>
        <end position="215"/>
    </location>
</feature>
<feature type="strand" evidence="13">
    <location>
        <begin position="216"/>
        <end position="218"/>
    </location>
</feature>
<feature type="strand" evidence="14">
    <location>
        <begin position="223"/>
        <end position="229"/>
    </location>
</feature>
<feature type="strand" evidence="15">
    <location>
        <begin position="231"/>
        <end position="233"/>
    </location>
</feature>
<feature type="helix" evidence="14">
    <location>
        <begin position="234"/>
        <end position="238"/>
    </location>
</feature>
<feature type="helix" evidence="14">
    <location>
        <begin position="243"/>
        <end position="248"/>
    </location>
</feature>
<feature type="helix" evidence="14">
    <location>
        <begin position="250"/>
        <end position="254"/>
    </location>
</feature>
<feature type="strand" evidence="14">
    <location>
        <begin position="269"/>
        <end position="273"/>
    </location>
</feature>
<feature type="strand" evidence="14">
    <location>
        <begin position="278"/>
        <end position="282"/>
    </location>
</feature>
<feature type="helix" evidence="14">
    <location>
        <begin position="285"/>
        <end position="287"/>
    </location>
</feature>
<feature type="strand" evidence="14">
    <location>
        <begin position="289"/>
        <end position="304"/>
    </location>
</feature>
<feature type="helix" evidence="14">
    <location>
        <begin position="308"/>
        <end position="318"/>
    </location>
</feature>
<feature type="helix" evidence="14">
    <location>
        <begin position="321"/>
        <end position="325"/>
    </location>
</feature>
<feature type="helix" evidence="14">
    <location>
        <begin position="328"/>
        <end position="331"/>
    </location>
</feature>
<feature type="strand" evidence="14">
    <location>
        <begin position="336"/>
        <end position="341"/>
    </location>
</feature>
<feature type="strand" evidence="14">
    <location>
        <begin position="345"/>
        <end position="348"/>
    </location>
</feature>
<feature type="strand" evidence="14">
    <location>
        <begin position="353"/>
        <end position="369"/>
    </location>
</feature>
<feature type="helix" evidence="14">
    <location>
        <begin position="375"/>
        <end position="388"/>
    </location>
</feature>
<feature type="helix" evidence="14">
    <location>
        <begin position="391"/>
        <end position="395"/>
    </location>
</feature>
<feature type="helix" evidence="14">
    <location>
        <begin position="399"/>
        <end position="418"/>
    </location>
</feature>
<feature type="turn" evidence="14">
    <location>
        <begin position="419"/>
        <end position="421"/>
    </location>
</feature>
<feature type="helix" evidence="14">
    <location>
        <begin position="426"/>
        <end position="442"/>
    </location>
</feature>
<feature type="turn" evidence="14">
    <location>
        <begin position="445"/>
        <end position="447"/>
    </location>
</feature>
<feature type="helix" evidence="14">
    <location>
        <begin position="448"/>
        <end position="450"/>
    </location>
</feature>
<feature type="helix" evidence="14">
    <location>
        <begin position="452"/>
        <end position="454"/>
    </location>
</feature>
<feature type="strand" evidence="13">
    <location>
        <begin position="457"/>
        <end position="459"/>
    </location>
</feature>
<feature type="helix" evidence="14">
    <location>
        <begin position="461"/>
        <end position="477"/>
    </location>
</feature>
<name>KDM7A_HUMAN</name>
<keyword id="KW-0002">3D-structure</keyword>
<keyword id="KW-0025">Alternative splicing</keyword>
<keyword id="KW-0156">Chromatin regulator</keyword>
<keyword id="KW-0223">Dioxygenase</keyword>
<keyword id="KW-0408">Iron</keyword>
<keyword id="KW-0479">Metal-binding</keyword>
<keyword id="KW-0524">Neurogenesis</keyword>
<keyword id="KW-0539">Nucleus</keyword>
<keyword id="KW-0560">Oxidoreductase</keyword>
<keyword id="KW-0597">Phosphoprotein</keyword>
<keyword id="KW-1267">Proteomics identification</keyword>
<keyword id="KW-1185">Reference proteome</keyword>
<keyword id="KW-0804">Transcription</keyword>
<keyword id="KW-0805">Transcription regulation</keyword>
<keyword id="KW-0862">Zinc</keyword>
<keyword id="KW-0863">Zinc-finger</keyword>
<comment type="function">
    <text evidence="6 7">Histone demethylase required for brain development. Specifically demethylates dimethylated 'Lys-9', 'Lys-27' and 'Lys-36' (H3K9me2, H3K27me2, H3K36me2, respectively) of histone H3 and monomethylated histone H4 'Lys-20' residue (H4K20Me1), thereby playing a central role in histone code (PubMed:20023638, PubMed:20622853). Specifically binds trimethylated 'Lys-4' of histone H3 (H3K4me3), affecting histone demethylase specificity: in presence of H3K4me3, it has no demethylase activity toward H3K9me2, while it has high activity toward H3K27me2. Demethylates H3K9me2 in absence of H3K4me3 (PubMed:20023638). Has activity toward H4K20Me1 only when nucleosome is used as a substrate and when not histone octamer is used as substrate (PubMed:20622853).</text>
</comment>
<comment type="catalytic activity">
    <reaction evidence="6 7">
        <text>N(6),N(6)-dimethyl-L-lysyl(9)-[histone H3] + 2 2-oxoglutarate + 2 O2 = L-lysyl(9)-[histone H3] + 2 formaldehyde + 2 succinate + 2 CO2</text>
        <dbReference type="Rhea" id="RHEA:60188"/>
        <dbReference type="Rhea" id="RHEA-COMP:15541"/>
        <dbReference type="Rhea" id="RHEA-COMP:15546"/>
        <dbReference type="ChEBI" id="CHEBI:15379"/>
        <dbReference type="ChEBI" id="CHEBI:16526"/>
        <dbReference type="ChEBI" id="CHEBI:16810"/>
        <dbReference type="ChEBI" id="CHEBI:16842"/>
        <dbReference type="ChEBI" id="CHEBI:29969"/>
        <dbReference type="ChEBI" id="CHEBI:30031"/>
        <dbReference type="ChEBI" id="CHEBI:61976"/>
        <dbReference type="EC" id="1.14.11.65"/>
    </reaction>
    <physiologicalReaction direction="left-to-right" evidence="10 11">
        <dbReference type="Rhea" id="RHEA:60189"/>
    </physiologicalReaction>
</comment>
<comment type="catalytic activity">
    <reaction evidence="6">
        <text>N(6),N(6)-dimethyl-L-lysyl(27)-[histone H3] + 2 2-oxoglutarate + 2 O2 = L-lysyl(27)-[histone H3] + 2 formaldehyde + 2 succinate + 2 CO2</text>
        <dbReference type="Rhea" id="RHEA:67800"/>
        <dbReference type="Rhea" id="RHEA-COMP:15539"/>
        <dbReference type="Rhea" id="RHEA-COMP:15548"/>
        <dbReference type="ChEBI" id="CHEBI:15379"/>
        <dbReference type="ChEBI" id="CHEBI:16526"/>
        <dbReference type="ChEBI" id="CHEBI:16810"/>
        <dbReference type="ChEBI" id="CHEBI:16842"/>
        <dbReference type="ChEBI" id="CHEBI:29969"/>
        <dbReference type="ChEBI" id="CHEBI:30031"/>
        <dbReference type="ChEBI" id="CHEBI:61976"/>
    </reaction>
    <physiologicalReaction direction="left-to-right" evidence="10">
        <dbReference type="Rhea" id="RHEA:67801"/>
    </physiologicalReaction>
</comment>
<comment type="catalytic activity">
    <reaction evidence="6 7">
        <text>N(6),N(6)-dimethyl-L-lysyl(36)-[histone H3] + 2-oxoglutarate + O2 = N(6)-methyl-L-lysyl(36)-[histone H3] + formaldehyde + succinate + CO2</text>
        <dbReference type="Rhea" id="RHEA:21788"/>
        <dbReference type="Rhea" id="RHEA-COMP:9786"/>
        <dbReference type="Rhea" id="RHEA-COMP:9787"/>
        <dbReference type="ChEBI" id="CHEBI:15379"/>
        <dbReference type="ChEBI" id="CHEBI:16526"/>
        <dbReference type="ChEBI" id="CHEBI:16810"/>
        <dbReference type="ChEBI" id="CHEBI:16842"/>
        <dbReference type="ChEBI" id="CHEBI:30031"/>
        <dbReference type="ChEBI" id="CHEBI:61929"/>
        <dbReference type="ChEBI" id="CHEBI:61976"/>
    </reaction>
    <physiologicalReaction direction="left-to-right" evidence="10 11">
        <dbReference type="Rhea" id="RHEA:21789"/>
    </physiologicalReaction>
</comment>
<comment type="catalytic activity">
    <reaction evidence="7">
        <text>N(6)-methyl-L-lysyl(20)-[histone H4] + 2-oxoglutarate + O2 = L-lysyl(20)-[histone H4] + formaldehyde + succinate + CO2</text>
        <dbReference type="Rhea" id="RHEA:67804"/>
        <dbReference type="Rhea" id="RHEA-COMP:15554"/>
        <dbReference type="Rhea" id="RHEA-COMP:15555"/>
        <dbReference type="ChEBI" id="CHEBI:15379"/>
        <dbReference type="ChEBI" id="CHEBI:16526"/>
        <dbReference type="ChEBI" id="CHEBI:16810"/>
        <dbReference type="ChEBI" id="CHEBI:16842"/>
        <dbReference type="ChEBI" id="CHEBI:29969"/>
        <dbReference type="ChEBI" id="CHEBI:30031"/>
        <dbReference type="ChEBI" id="CHEBI:61929"/>
    </reaction>
    <physiologicalReaction direction="left-to-right" evidence="11">
        <dbReference type="Rhea" id="RHEA:67805"/>
    </physiologicalReaction>
</comment>
<comment type="cofactor">
    <cofactor evidence="6">
        <name>Fe(2+)</name>
        <dbReference type="ChEBI" id="CHEBI:29033"/>
    </cofactor>
    <text evidence="6">Binds 1 Fe(2+) ion per subunit.</text>
</comment>
<comment type="biophysicochemical properties">
    <kinetics>
        <KM evidence="6">1.2 uM for histone H3 H3K9Me2</KM>
    </kinetics>
</comment>
<comment type="subcellular location">
    <subcellularLocation>
        <location>Nucleus</location>
    </subcellularLocation>
</comment>
<comment type="alternative products">
    <event type="alternative splicing"/>
    <isoform>
        <id>Q6ZMT4-1</id>
        <name>1</name>
        <sequence type="displayed"/>
    </isoform>
    <isoform>
        <id>Q6ZMT4-2</id>
        <name>2</name>
        <sequence type="described" ref="VSP_017458 VSP_017459"/>
    </isoform>
</comment>
<comment type="domain">
    <text evidence="6">The PHD-type zinc finger mediates the binding to H3K4me3. Binding to H3K4me3 prevents its access to H3K9me2.</text>
</comment>
<comment type="domain">
    <text evidence="6">The linker region is a critical determinant of demethylase specificity. It prevents the active site of JmjC to reach the target H3K9me2 when the PHD-type zinc finger binds to H3K4me3, while it favors selectivity toward H3K27me2.</text>
</comment>
<comment type="miscellaneous">
    <molecule>Isoform 2</molecule>
    <text evidence="9">May be produced at very low levels due to a premature stop codon in the mRNA, leading to nonsense-mediated mRNA decay.</text>
</comment>
<comment type="similarity">
    <text evidence="9">Belongs to the JHDM1 histone demethylase family. JHDM1D subfamily.</text>
</comment>
<comment type="sequence caution" evidence="9">
    <conflict type="frameshift">
        <sequence resource="EMBL-CDS" id="BAD18641"/>
    </conflict>
</comment>
<comment type="sequence caution" evidence="9">
    <conflict type="erroneous gene model prediction">
        <sequence resource="EMBL-CDS" id="EAL24032"/>
    </conflict>
</comment>
<evidence type="ECO:0000250" key="1"/>
<evidence type="ECO:0000255" key="2">
    <source>
        <dbReference type="PROSITE-ProRule" id="PRU00146"/>
    </source>
</evidence>
<evidence type="ECO:0000255" key="3">
    <source>
        <dbReference type="PROSITE-ProRule" id="PRU00538"/>
    </source>
</evidence>
<evidence type="ECO:0000256" key="4">
    <source>
        <dbReference type="SAM" id="MobiDB-lite"/>
    </source>
</evidence>
<evidence type="ECO:0000269" key="5">
    <source>
    </source>
</evidence>
<evidence type="ECO:0000269" key="6">
    <source>
    </source>
</evidence>
<evidence type="ECO:0000269" key="7">
    <source>
    </source>
</evidence>
<evidence type="ECO:0000303" key="8">
    <source>
    </source>
</evidence>
<evidence type="ECO:0000305" key="9"/>
<evidence type="ECO:0000305" key="10">
    <source>
    </source>
</evidence>
<evidence type="ECO:0000305" key="11">
    <source>
    </source>
</evidence>
<evidence type="ECO:0007744" key="12">
    <source>
    </source>
</evidence>
<evidence type="ECO:0007829" key="13">
    <source>
        <dbReference type="PDB" id="3KV5"/>
    </source>
</evidence>
<evidence type="ECO:0007829" key="14">
    <source>
        <dbReference type="PDB" id="3KV9"/>
    </source>
</evidence>
<evidence type="ECO:0007829" key="15">
    <source>
        <dbReference type="PDB" id="3U78"/>
    </source>
</evidence>
<accession>Q6ZMT4</accession>
<accession>A4D1S9</accession>
<accession>C9JJH9</accession>
<accession>C9JQU2</accession>
<accession>Q6MZL8</accession>
<accession>Q9C0E5</accession>
<organism>
    <name type="scientific">Homo sapiens</name>
    <name type="common">Human</name>
    <dbReference type="NCBI Taxonomy" id="9606"/>
    <lineage>
        <taxon>Eukaryota</taxon>
        <taxon>Metazoa</taxon>
        <taxon>Chordata</taxon>
        <taxon>Craniata</taxon>
        <taxon>Vertebrata</taxon>
        <taxon>Euteleostomi</taxon>
        <taxon>Mammalia</taxon>
        <taxon>Eutheria</taxon>
        <taxon>Euarchontoglires</taxon>
        <taxon>Primates</taxon>
        <taxon>Haplorrhini</taxon>
        <taxon>Catarrhini</taxon>
        <taxon>Hominidae</taxon>
        <taxon>Homo</taxon>
    </lineage>
</organism>
<proteinExistence type="evidence at protein level"/>
<reference key="1">
    <citation type="journal article" date="2004" name="Nat. Genet.">
        <title>Complete sequencing and characterization of 21,243 full-length human cDNAs.</title>
        <authorList>
            <person name="Ota T."/>
            <person name="Suzuki Y."/>
            <person name="Nishikawa T."/>
            <person name="Otsuki T."/>
            <person name="Sugiyama T."/>
            <person name="Irie R."/>
            <person name="Wakamatsu A."/>
            <person name="Hayashi K."/>
            <person name="Sato H."/>
            <person name="Nagai K."/>
            <person name="Kimura K."/>
            <person name="Makita H."/>
            <person name="Sekine M."/>
            <person name="Obayashi M."/>
            <person name="Nishi T."/>
            <person name="Shibahara T."/>
            <person name="Tanaka T."/>
            <person name="Ishii S."/>
            <person name="Yamamoto J."/>
            <person name="Saito K."/>
            <person name="Kawai Y."/>
            <person name="Isono Y."/>
            <person name="Nakamura Y."/>
            <person name="Nagahari K."/>
            <person name="Murakami K."/>
            <person name="Yasuda T."/>
            <person name="Iwayanagi T."/>
            <person name="Wagatsuma M."/>
            <person name="Shiratori A."/>
            <person name="Sudo H."/>
            <person name="Hosoiri T."/>
            <person name="Kaku Y."/>
            <person name="Kodaira H."/>
            <person name="Kondo H."/>
            <person name="Sugawara M."/>
            <person name="Takahashi M."/>
            <person name="Kanda K."/>
            <person name="Yokoi T."/>
            <person name="Furuya T."/>
            <person name="Kikkawa E."/>
            <person name="Omura Y."/>
            <person name="Abe K."/>
            <person name="Kamihara K."/>
            <person name="Katsuta N."/>
            <person name="Sato K."/>
            <person name="Tanikawa M."/>
            <person name="Yamazaki M."/>
            <person name="Ninomiya K."/>
            <person name="Ishibashi T."/>
            <person name="Yamashita H."/>
            <person name="Murakawa K."/>
            <person name="Fujimori K."/>
            <person name="Tanai H."/>
            <person name="Kimata M."/>
            <person name="Watanabe M."/>
            <person name="Hiraoka S."/>
            <person name="Chiba Y."/>
            <person name="Ishida S."/>
            <person name="Ono Y."/>
            <person name="Takiguchi S."/>
            <person name="Watanabe S."/>
            <person name="Yosida M."/>
            <person name="Hotuta T."/>
            <person name="Kusano J."/>
            <person name="Kanehori K."/>
            <person name="Takahashi-Fujii A."/>
            <person name="Hara H."/>
            <person name="Tanase T.-O."/>
            <person name="Nomura Y."/>
            <person name="Togiya S."/>
            <person name="Komai F."/>
            <person name="Hara R."/>
            <person name="Takeuchi K."/>
            <person name="Arita M."/>
            <person name="Imose N."/>
            <person name="Musashino K."/>
            <person name="Yuuki H."/>
            <person name="Oshima A."/>
            <person name="Sasaki N."/>
            <person name="Aotsuka S."/>
            <person name="Yoshikawa Y."/>
            <person name="Matsunawa H."/>
            <person name="Ichihara T."/>
            <person name="Shiohata N."/>
            <person name="Sano S."/>
            <person name="Moriya S."/>
            <person name="Momiyama H."/>
            <person name="Satoh N."/>
            <person name="Takami S."/>
            <person name="Terashima Y."/>
            <person name="Suzuki O."/>
            <person name="Nakagawa S."/>
            <person name="Senoh A."/>
            <person name="Mizoguchi H."/>
            <person name="Goto Y."/>
            <person name="Shimizu F."/>
            <person name="Wakebe H."/>
            <person name="Hishigaki H."/>
            <person name="Watanabe T."/>
            <person name="Sugiyama A."/>
            <person name="Takemoto M."/>
            <person name="Kawakami B."/>
            <person name="Yamazaki M."/>
            <person name="Watanabe K."/>
            <person name="Kumagai A."/>
            <person name="Itakura S."/>
            <person name="Fukuzumi Y."/>
            <person name="Fujimori Y."/>
            <person name="Komiyama M."/>
            <person name="Tashiro H."/>
            <person name="Tanigami A."/>
            <person name="Fujiwara T."/>
            <person name="Ono T."/>
            <person name="Yamada K."/>
            <person name="Fujii Y."/>
            <person name="Ozaki K."/>
            <person name="Hirao M."/>
            <person name="Ohmori Y."/>
            <person name="Kawabata A."/>
            <person name="Hikiji T."/>
            <person name="Kobatake N."/>
            <person name="Inagaki H."/>
            <person name="Ikema Y."/>
            <person name="Okamoto S."/>
            <person name="Okitani R."/>
            <person name="Kawakami T."/>
            <person name="Noguchi S."/>
            <person name="Itoh T."/>
            <person name="Shigeta K."/>
            <person name="Senba T."/>
            <person name="Matsumura K."/>
            <person name="Nakajima Y."/>
            <person name="Mizuno T."/>
            <person name="Morinaga M."/>
            <person name="Sasaki M."/>
            <person name="Togashi T."/>
            <person name="Oyama M."/>
            <person name="Hata H."/>
            <person name="Watanabe M."/>
            <person name="Komatsu T."/>
            <person name="Mizushima-Sugano J."/>
            <person name="Satoh T."/>
            <person name="Shirai Y."/>
            <person name="Takahashi Y."/>
            <person name="Nakagawa K."/>
            <person name="Okumura K."/>
            <person name="Nagase T."/>
            <person name="Nomura N."/>
            <person name="Kikuchi H."/>
            <person name="Masuho Y."/>
            <person name="Yamashita R."/>
            <person name="Nakai K."/>
            <person name="Yada T."/>
            <person name="Nakamura Y."/>
            <person name="Ohara O."/>
            <person name="Isogai T."/>
            <person name="Sugano S."/>
        </authorList>
    </citation>
    <scope>NUCLEOTIDE SEQUENCE [LARGE SCALE MRNA] (ISOFORM 1)</scope>
    <source>
        <tissue>Trachea</tissue>
    </source>
</reference>
<reference key="2">
    <citation type="journal article" date="2003" name="Nature">
        <title>The DNA sequence of human chromosome 7.</title>
        <authorList>
            <person name="Hillier L.W."/>
            <person name="Fulton R.S."/>
            <person name="Fulton L.A."/>
            <person name="Graves T.A."/>
            <person name="Pepin K.H."/>
            <person name="Wagner-McPherson C."/>
            <person name="Layman D."/>
            <person name="Maas J."/>
            <person name="Jaeger S."/>
            <person name="Walker R."/>
            <person name="Wylie K."/>
            <person name="Sekhon M."/>
            <person name="Becker M.C."/>
            <person name="O'Laughlin M.D."/>
            <person name="Schaller M.E."/>
            <person name="Fewell G.A."/>
            <person name="Delehaunty K.D."/>
            <person name="Miner T.L."/>
            <person name="Nash W.E."/>
            <person name="Cordes M."/>
            <person name="Du H."/>
            <person name="Sun H."/>
            <person name="Edwards J."/>
            <person name="Bradshaw-Cordum H."/>
            <person name="Ali J."/>
            <person name="Andrews S."/>
            <person name="Isak A."/>
            <person name="Vanbrunt A."/>
            <person name="Nguyen C."/>
            <person name="Du F."/>
            <person name="Lamar B."/>
            <person name="Courtney L."/>
            <person name="Kalicki J."/>
            <person name="Ozersky P."/>
            <person name="Bielicki L."/>
            <person name="Scott K."/>
            <person name="Holmes A."/>
            <person name="Harkins R."/>
            <person name="Harris A."/>
            <person name="Strong C.M."/>
            <person name="Hou S."/>
            <person name="Tomlinson C."/>
            <person name="Dauphin-Kohlberg S."/>
            <person name="Kozlowicz-Reilly A."/>
            <person name="Leonard S."/>
            <person name="Rohlfing T."/>
            <person name="Rock S.M."/>
            <person name="Tin-Wollam A.-M."/>
            <person name="Abbott A."/>
            <person name="Minx P."/>
            <person name="Maupin R."/>
            <person name="Strowmatt C."/>
            <person name="Latreille P."/>
            <person name="Miller N."/>
            <person name="Johnson D."/>
            <person name="Murray J."/>
            <person name="Woessner J.P."/>
            <person name="Wendl M.C."/>
            <person name="Yang S.-P."/>
            <person name="Schultz B.R."/>
            <person name="Wallis J.W."/>
            <person name="Spieth J."/>
            <person name="Bieri T.A."/>
            <person name="Nelson J.O."/>
            <person name="Berkowicz N."/>
            <person name="Wohldmann P.E."/>
            <person name="Cook L.L."/>
            <person name="Hickenbotham M.T."/>
            <person name="Eldred J."/>
            <person name="Williams D."/>
            <person name="Bedell J.A."/>
            <person name="Mardis E.R."/>
            <person name="Clifton S.W."/>
            <person name="Chissoe S.L."/>
            <person name="Marra M.A."/>
            <person name="Raymond C."/>
            <person name="Haugen E."/>
            <person name="Gillett W."/>
            <person name="Zhou Y."/>
            <person name="James R."/>
            <person name="Phelps K."/>
            <person name="Iadanoto S."/>
            <person name="Bubb K."/>
            <person name="Simms E."/>
            <person name="Levy R."/>
            <person name="Clendenning J."/>
            <person name="Kaul R."/>
            <person name="Kent W.J."/>
            <person name="Furey T.S."/>
            <person name="Baertsch R.A."/>
            <person name="Brent M.R."/>
            <person name="Keibler E."/>
            <person name="Flicek P."/>
            <person name="Bork P."/>
            <person name="Suyama M."/>
            <person name="Bailey J.A."/>
            <person name="Portnoy M.E."/>
            <person name="Torrents D."/>
            <person name="Chinwalla A.T."/>
            <person name="Gish W.R."/>
            <person name="Eddy S.R."/>
            <person name="McPherson J.D."/>
            <person name="Olson M.V."/>
            <person name="Eichler E.E."/>
            <person name="Green E.D."/>
            <person name="Waterston R.H."/>
            <person name="Wilson R.K."/>
        </authorList>
    </citation>
    <scope>NUCLEOTIDE SEQUENCE [LARGE SCALE GENOMIC DNA]</scope>
</reference>
<reference key="3">
    <citation type="journal article" date="2003" name="Science">
        <title>Human chromosome 7: DNA sequence and biology.</title>
        <authorList>
            <person name="Scherer S.W."/>
            <person name="Cheung J."/>
            <person name="MacDonald J.R."/>
            <person name="Osborne L.R."/>
            <person name="Nakabayashi K."/>
            <person name="Herbrick J.-A."/>
            <person name="Carson A.R."/>
            <person name="Parker-Katiraee L."/>
            <person name="Skaug J."/>
            <person name="Khaja R."/>
            <person name="Zhang J."/>
            <person name="Hudek A.K."/>
            <person name="Li M."/>
            <person name="Haddad M."/>
            <person name="Duggan G.E."/>
            <person name="Fernandez B.A."/>
            <person name="Kanematsu E."/>
            <person name="Gentles S."/>
            <person name="Christopoulos C.C."/>
            <person name="Choufani S."/>
            <person name="Kwasnicka D."/>
            <person name="Zheng X.H."/>
            <person name="Lai Z."/>
            <person name="Nusskern D.R."/>
            <person name="Zhang Q."/>
            <person name="Gu Z."/>
            <person name="Lu F."/>
            <person name="Zeesman S."/>
            <person name="Nowaczyk M.J."/>
            <person name="Teshima I."/>
            <person name="Chitayat D."/>
            <person name="Shuman C."/>
            <person name="Weksberg R."/>
            <person name="Zackai E.H."/>
            <person name="Grebe T.A."/>
            <person name="Cox S.R."/>
            <person name="Kirkpatrick S.J."/>
            <person name="Rahman N."/>
            <person name="Friedman J.M."/>
            <person name="Heng H.H.Q."/>
            <person name="Pelicci P.G."/>
            <person name="Lo-Coco F."/>
            <person name="Belloni E."/>
            <person name="Shaffer L.G."/>
            <person name="Pober B."/>
            <person name="Morton C.C."/>
            <person name="Gusella J.F."/>
            <person name="Bruns G.A.P."/>
            <person name="Korf B.R."/>
            <person name="Quade B.J."/>
            <person name="Ligon A.H."/>
            <person name="Ferguson H."/>
            <person name="Higgins A.W."/>
            <person name="Leach N.T."/>
            <person name="Herrick S.R."/>
            <person name="Lemyre E."/>
            <person name="Farra C.G."/>
            <person name="Kim H.-G."/>
            <person name="Summers A.M."/>
            <person name="Gripp K.W."/>
            <person name="Roberts W."/>
            <person name="Szatmari P."/>
            <person name="Winsor E.J.T."/>
            <person name="Grzeschik K.-H."/>
            <person name="Teebi A."/>
            <person name="Minassian B.A."/>
            <person name="Kere J."/>
            <person name="Armengol L."/>
            <person name="Pujana M.A."/>
            <person name="Estivill X."/>
            <person name="Wilson M.D."/>
            <person name="Koop B.F."/>
            <person name="Tosi S."/>
            <person name="Moore G.E."/>
            <person name="Boright A.P."/>
            <person name="Zlotorynski E."/>
            <person name="Kerem B."/>
            <person name="Kroisel P.M."/>
            <person name="Petek E."/>
            <person name="Oscier D.G."/>
            <person name="Mould S.J."/>
            <person name="Doehner H."/>
            <person name="Doehner K."/>
            <person name="Rommens J.M."/>
            <person name="Vincent J.B."/>
            <person name="Venter J.C."/>
            <person name="Li P.W."/>
            <person name="Mural R.J."/>
            <person name="Adams M.D."/>
            <person name="Tsui L.-C."/>
        </authorList>
    </citation>
    <scope>NUCLEOTIDE SEQUENCE [LARGE SCALE GENOMIC DNA]</scope>
</reference>
<reference key="4">
    <citation type="journal article" date="2000" name="DNA Res.">
        <title>Prediction of the coding sequences of unidentified human genes. XIX. The complete sequences of 100 new cDNA clones from brain which code for large proteins in vitro.</title>
        <authorList>
            <person name="Nagase T."/>
            <person name="Kikuno R."/>
            <person name="Hattori A."/>
            <person name="Kondo Y."/>
            <person name="Okumura K."/>
            <person name="Ohara O."/>
        </authorList>
    </citation>
    <scope>NUCLEOTIDE SEQUENCE [LARGE SCALE MRNA] OF 565-941 (ISOFORM 1)</scope>
    <scope>VARIANT SER-644</scope>
</reference>
<reference key="5">
    <citation type="journal article" date="2007" name="BMC Genomics">
        <title>The full-ORF clone resource of the German cDNA consortium.</title>
        <authorList>
            <person name="Bechtel S."/>
            <person name="Rosenfelder H."/>
            <person name="Duda A."/>
            <person name="Schmidt C.P."/>
            <person name="Ernst U."/>
            <person name="Wellenreuther R."/>
            <person name="Mehrle A."/>
            <person name="Schuster C."/>
            <person name="Bahr A."/>
            <person name="Bloecker H."/>
            <person name="Heubner D."/>
            <person name="Hoerlein A."/>
            <person name="Michel G."/>
            <person name="Wedler H."/>
            <person name="Koehrer K."/>
            <person name="Ottenwaelder B."/>
            <person name="Poustka A."/>
            <person name="Wiemann S."/>
            <person name="Schupp I."/>
        </authorList>
    </citation>
    <scope>NUCLEOTIDE SEQUENCE [LARGE SCALE MRNA] OF 407-941 (ISOFORM 2)</scope>
    <source>
        <tissue>Fetal kidney</tissue>
    </source>
</reference>
<reference key="6">
    <citation type="journal article" date="2010" name="Nature">
        <title>Histone H4K20/H3K9 demethylase PHF8 regulates zebrafish brain and craniofacial development.</title>
        <authorList>
            <person name="Qi H.H."/>
            <person name="Sarkissian M."/>
            <person name="Hu G.Q."/>
            <person name="Wang Z."/>
            <person name="Bhattacharjee A."/>
            <person name="Gordon D.B."/>
            <person name="Gonzales M."/>
            <person name="Lan F."/>
            <person name="Ongusaha P.P."/>
            <person name="Huarte M."/>
            <person name="Yaghi N.K."/>
            <person name="Lim H."/>
            <person name="Garcia B.A."/>
            <person name="Brizuela L."/>
            <person name="Zhao K."/>
            <person name="Roberts T.M."/>
            <person name="Shi Y."/>
        </authorList>
    </citation>
    <scope>FUNCTION</scope>
    <scope>CATALYTIC ACTIVITY</scope>
</reference>
<reference key="7">
    <citation type="journal article" date="2013" name="J. Proteome Res.">
        <title>Toward a comprehensive characterization of a human cancer cell phosphoproteome.</title>
        <authorList>
            <person name="Zhou H."/>
            <person name="Di Palma S."/>
            <person name="Preisinger C."/>
            <person name="Peng M."/>
            <person name="Polat A.N."/>
            <person name="Heck A.J."/>
            <person name="Mohammed S."/>
        </authorList>
    </citation>
    <scope>PHOSPHORYLATION [LARGE SCALE ANALYSIS] AT SER-604</scope>
    <scope>IDENTIFICATION BY MASS SPECTROMETRY [LARGE SCALE ANALYSIS]</scope>
    <source>
        <tissue>Erythroleukemia</tissue>
    </source>
</reference>
<reference key="8">
    <citation type="journal article" date="2010" name="Nat. Struct. Mol. Biol.">
        <title>Enzymatic and structural insights for substrate specificity of a family of jumonji histone lysine demethylases.</title>
        <authorList>
            <person name="Horton J.R."/>
            <person name="Upadhyay A.K."/>
            <person name="Qi H.H."/>
            <person name="Zhang X."/>
            <person name="Shi Y."/>
            <person name="Cheng X."/>
        </authorList>
    </citation>
    <scope>X-RAY CRYSTALLOGRAPHY (2.29 ANGSTROMS) OF 1-488 IN COMPLEX WITH IRON AND N-OXALYLGLYCINE</scope>
    <scope>ZINC-BINDING</scope>
    <scope>FUNCTION</scope>
    <scope>CATALYTIC ACTIVITY</scope>
    <scope>BIOPHYSICOCHEMICAL PROPERTIES</scope>
    <scope>COFACTOR</scope>
    <scope>DOMAIN LINKER AND PHD-FINGER</scope>
</reference>
<protein>
    <recommendedName>
        <fullName>Lysine-specific demethylase 7A</fullName>
    </recommendedName>
    <alternativeName>
        <fullName>JmjC domain-containing histone demethylation protein 1D</fullName>
    </alternativeName>
    <alternativeName>
        <fullName>Lysine-specific demethylase 7</fullName>
    </alternativeName>
    <alternativeName>
        <fullName>[histone H3]-dimethyl-L-lysine9 demethylase 7A</fullName>
        <ecNumber evidence="6 7">1.14.11.65</ecNumber>
    </alternativeName>
</protein>
<sequence length="941" mass="106557">MAGAAAAVAAGAAAGAAAAAVSVAAPGRASAPPPPPPVYCVCRQPYDVNRFMIECDICKDWFHGSCVGVEEHHAVDIDLYHCPNCAVLHGSSLMKKRRNWHRHDYTEIDDGSKPVQAGTRTFIKELRSRVFPSADEIIIKMHGSQLTQRYLEKHGFDVPIMVPKLDDLGLRLPSPTFSVMDVERYVGGDKVIDVIDVARQADSKMTLHNYVKYFMNPNRPKVLNVISLEFSDTKMSELVEVPDIAKKLSWVENYWPDDSVFPKPFVQKYCLMGVQDSYTDFHIDFGGTSVWYHVLWGEKIFYLIKPTDENLARYESWSSSVTQSEVFFGDKVDKCYKCVVKQGHTLFVPTGWIHAVLTSQDCMAFGGNFLHNLNIGMQLRCYEMEKRLKTPDLFKFPFFEAICWFVAKNLLETLKELREDGFQPQTYLVQGVKALHTALKLWMKKELVSEHAFEIPDNVRPGHLIKELSKVIRAIEEENGKPVKSQGIPIVCPVSRSSNEATSPYHSRRKMRKLRDHNVRTPSNLDILELHTREVLKRLEMCPWEEDILSSKLNGKFNKHLQPSSTVPEWRAKDNDLRLLLTNGRIIKDERQPFADQSLYTADSENEEDKRRTKKAKMKIEESSGVEGVEHEESQKPLNGFFTRVKSELRSRSSGYSDISESEDSGPECTALKSIFTTEESESSGDEKKQEITSNFKEESNVMRNFLQKSQKPSRSEIPIKRECPTSTSTEEEAIQGMLSMAGLHYSTCLQRQIQSTDCSGERNSLQDPSSCHGSNHEVRQLYRYDKPVECGYHVKTEDPDLRTSSWIKQFDTSRFHPQDLSRSQKCIRKEGSSEISQRVQSRNYVDSSGSSLQNGKYMQNSNLTSGACQISNGSLSPERPVGETSFSVPLHPTKRPASNPPPISNQATKGKRPKKGMATAKQRLGKILKLNRNGHARFFV</sequence>
<gene>
    <name type="primary">KDM7A</name>
    <name type="synonym">JHDM1D</name>
    <name type="synonym">KDM7</name>
    <name type="synonym">KIAA1718</name>
</gene>